<accession>P9WQ58</accession>
<accession>L0TCP5</accession>
<accession>P96290</accession>
<accession>Q7D6E4</accession>
<proteinExistence type="inferred from homology"/>
<comment type="function">
    <text evidence="2">Involved in the biosynthesis of phthiocerol dimycocerosate (PDIM), a cell wall-associated lipid found only in pathogenic mycobacteria. Catalyzes the activation of long-chain fatty acids as acyl-adenylates (acyl-AMP), which are then transferred to the multifunctional polyketide synthase Mas for further chain extension.</text>
</comment>
<comment type="catalytic activity">
    <reaction evidence="2">
        <text>holo-[mycocerosate synthase] + a long-chain fatty acid + ATP = a long-chain fatty acyl-[mycocerosate synthase] + AMP + diphosphate</text>
        <dbReference type="Rhea" id="RHEA:10696"/>
        <dbReference type="Rhea" id="RHEA-COMP:12641"/>
        <dbReference type="Rhea" id="RHEA-COMP:13239"/>
        <dbReference type="ChEBI" id="CHEBI:30616"/>
        <dbReference type="ChEBI" id="CHEBI:33019"/>
        <dbReference type="ChEBI" id="CHEBI:57560"/>
        <dbReference type="ChEBI" id="CHEBI:64479"/>
        <dbReference type="ChEBI" id="CHEBI:133243"/>
        <dbReference type="ChEBI" id="CHEBI:456215"/>
        <dbReference type="EC" id="6.2.1.49"/>
    </reaction>
    <physiologicalReaction direction="left-to-right" evidence="2">
        <dbReference type="Rhea" id="RHEA:10697"/>
    </physiologicalReaction>
</comment>
<comment type="catalytic activity">
    <reaction evidence="2">
        <text>a long-chain fatty acid + ATP + H(+) = a long-chain fatty acyl-AMP + diphosphate</text>
        <dbReference type="Rhea" id="RHEA:52336"/>
        <dbReference type="ChEBI" id="CHEBI:15378"/>
        <dbReference type="ChEBI" id="CHEBI:30616"/>
        <dbReference type="ChEBI" id="CHEBI:33019"/>
        <dbReference type="ChEBI" id="CHEBI:57560"/>
        <dbReference type="ChEBI" id="CHEBI:136562"/>
    </reaction>
    <physiologicalReaction direction="left-to-right" evidence="2">
        <dbReference type="Rhea" id="RHEA:52337"/>
    </physiologicalReaction>
</comment>
<comment type="catalytic activity">
    <reaction evidence="2">
        <text>holo-[mycocerosate synthase] + a long-chain fatty acyl-AMP = a long-chain fatty acyl-[mycocerosate synthase] + AMP + H(+)</text>
        <dbReference type="Rhea" id="RHEA:52340"/>
        <dbReference type="Rhea" id="RHEA-COMP:12641"/>
        <dbReference type="Rhea" id="RHEA-COMP:13239"/>
        <dbReference type="ChEBI" id="CHEBI:15378"/>
        <dbReference type="ChEBI" id="CHEBI:64479"/>
        <dbReference type="ChEBI" id="CHEBI:133243"/>
        <dbReference type="ChEBI" id="CHEBI:136562"/>
        <dbReference type="ChEBI" id="CHEBI:456215"/>
    </reaction>
    <physiologicalReaction direction="left-to-right" evidence="2">
        <dbReference type="Rhea" id="RHEA:52341"/>
    </physiologicalReaction>
</comment>
<comment type="pathway">
    <text evidence="2">Lipid metabolism; fatty acid biosynthesis.</text>
</comment>
<comment type="similarity">
    <text evidence="4">Belongs to the ATP-dependent AMP-binding enzyme family.</text>
</comment>
<sequence>MSVRSLPAALRACARLQPHDPAFTFMDYEQDWDGVAITLTWSQLYRRTLNVAQELSRCGSTGDRVVISAPQGLEYVVAFLGALQAGRIAVPLSVPQGGVTDERSDSVLSDSSPVAILTTSSAVDDVVQHVARRPGESPPSIIEVDLLDLDAPNGYTFKEDEYPSTAYLQYTSGSTRTPAGVVMSHQNVRVNFEQLMSGYFADTDGIPPPNSALVSWLPFYHDMGLVIGICAPILGGYPAVLTSPVSFLQRPARWMHLMASDFHAFSAAPNFAFELAARRTTDDDMAGRDLGNILTILSGSERVQAATIKRFADRFARFNLQERVIRPSYGLAEATVYVATSKPGQPPETVDFDTESLSAGHAKPCAGGGATSLISYMLPRSPIVRIVDSDTCIECPDGTVGEIWVHGDNVANGYWQKPDESERTFGGKIVTPSPGTPEGPWLRTGDSGFVTDGKMFIIGRIKDLLIVYGRNHSPDDIEATIQEITRGRCAAISVPGDRSTEKLVAIIELKKRGDSDQDAMARLGAIKREVTSALSSSHGLSVADLVLVAPGSIPITTSGKVRRGACVEQYRQDQFARLDA</sequence>
<reference key="1">
    <citation type="journal article" date="2002" name="J. Bacteriol.">
        <title>Whole-genome comparison of Mycobacterium tuberculosis clinical and laboratory strains.</title>
        <authorList>
            <person name="Fleischmann R.D."/>
            <person name="Alland D."/>
            <person name="Eisen J.A."/>
            <person name="Carpenter L."/>
            <person name="White O."/>
            <person name="Peterson J.D."/>
            <person name="DeBoy R.T."/>
            <person name="Dodson R.J."/>
            <person name="Gwinn M.L."/>
            <person name="Haft D.H."/>
            <person name="Hickey E.K."/>
            <person name="Kolonay J.F."/>
            <person name="Nelson W.C."/>
            <person name="Umayam L.A."/>
            <person name="Ermolaeva M.D."/>
            <person name="Salzberg S.L."/>
            <person name="Delcher A."/>
            <person name="Utterback T.R."/>
            <person name="Weidman J.F."/>
            <person name="Khouri H.M."/>
            <person name="Gill J."/>
            <person name="Mikula A."/>
            <person name="Bishai W."/>
            <person name="Jacobs W.R. Jr."/>
            <person name="Venter J.C."/>
            <person name="Fraser C.M."/>
        </authorList>
    </citation>
    <scope>NUCLEOTIDE SEQUENCE [LARGE SCALE GENOMIC DNA]</scope>
    <source>
        <strain>CDC 1551 / Oshkosh</strain>
    </source>
</reference>
<gene>
    <name type="primary">fadD28</name>
    <name type="synonym">acoas</name>
    <name type="ordered locus">MT3011</name>
</gene>
<evidence type="ECO:0000250" key="1"/>
<evidence type="ECO:0000250" key="2">
    <source>
        <dbReference type="UniProtKB" id="P9WQ59"/>
    </source>
</evidence>
<evidence type="ECO:0000256" key="3">
    <source>
        <dbReference type="SAM" id="MobiDB-lite"/>
    </source>
</evidence>
<evidence type="ECO:0000305" key="4"/>
<protein>
    <recommendedName>
        <fullName evidence="4">Long-chain-fatty-acid--AMP ligase FadD28</fullName>
        <ecNumber evidence="2">6.2.1.49</ecNumber>
    </recommendedName>
    <alternativeName>
        <fullName>Acyl-AMP synthetase</fullName>
    </alternativeName>
    <alternativeName>
        <fullName evidence="4">Long-chain fatty acid adenylyltransferase FadD28</fullName>
    </alternativeName>
</protein>
<organism>
    <name type="scientific">Mycobacterium tuberculosis (strain CDC 1551 / Oshkosh)</name>
    <dbReference type="NCBI Taxonomy" id="83331"/>
    <lineage>
        <taxon>Bacteria</taxon>
        <taxon>Bacillati</taxon>
        <taxon>Actinomycetota</taxon>
        <taxon>Actinomycetes</taxon>
        <taxon>Mycobacteriales</taxon>
        <taxon>Mycobacteriaceae</taxon>
        <taxon>Mycobacterium</taxon>
        <taxon>Mycobacterium tuberculosis complex</taxon>
    </lineage>
</organism>
<keyword id="KW-0067">ATP-binding</keyword>
<keyword id="KW-0276">Fatty acid metabolism</keyword>
<keyword id="KW-0436">Ligase</keyword>
<keyword id="KW-0443">Lipid metabolism</keyword>
<keyword id="KW-0547">Nucleotide-binding</keyword>
<keyword id="KW-1185">Reference proteome</keyword>
<dbReference type="EC" id="6.2.1.49" evidence="2"/>
<dbReference type="EMBL" id="AE000516">
    <property type="protein sequence ID" value="AAK47338.1"/>
    <property type="molecule type" value="Genomic_DNA"/>
</dbReference>
<dbReference type="PIR" id="B70668">
    <property type="entry name" value="B70668"/>
</dbReference>
<dbReference type="RefSeq" id="WP_003414857.1">
    <property type="nucleotide sequence ID" value="NZ_KK341227.1"/>
</dbReference>
<dbReference type="SMR" id="P9WQ58"/>
<dbReference type="KEGG" id="mtc:MT3011"/>
<dbReference type="PATRIC" id="fig|83331.31.peg.3252"/>
<dbReference type="HOGENOM" id="CLU_000022_23_7_11"/>
<dbReference type="UniPathway" id="UPA00094"/>
<dbReference type="Proteomes" id="UP000001020">
    <property type="component" value="Chromosome"/>
</dbReference>
<dbReference type="GO" id="GO:0005886">
    <property type="term" value="C:plasma membrane"/>
    <property type="evidence" value="ECO:0007669"/>
    <property type="project" value="TreeGrafter"/>
</dbReference>
<dbReference type="GO" id="GO:0070566">
    <property type="term" value="F:adenylyltransferase activity"/>
    <property type="evidence" value="ECO:0007669"/>
    <property type="project" value="TreeGrafter"/>
</dbReference>
<dbReference type="GO" id="GO:0005524">
    <property type="term" value="F:ATP binding"/>
    <property type="evidence" value="ECO:0007669"/>
    <property type="project" value="UniProtKB-KW"/>
</dbReference>
<dbReference type="GO" id="GO:0016874">
    <property type="term" value="F:ligase activity"/>
    <property type="evidence" value="ECO:0007669"/>
    <property type="project" value="UniProtKB-KW"/>
</dbReference>
<dbReference type="GO" id="GO:0071766">
    <property type="term" value="P:Actinobacterium-type cell wall biogenesis"/>
    <property type="evidence" value="ECO:0007669"/>
    <property type="project" value="UniProtKB-ARBA"/>
</dbReference>
<dbReference type="GO" id="GO:0006633">
    <property type="term" value="P:fatty acid biosynthetic process"/>
    <property type="evidence" value="ECO:0007669"/>
    <property type="project" value="UniProtKB-UniPathway"/>
</dbReference>
<dbReference type="CDD" id="cd05931">
    <property type="entry name" value="FAAL"/>
    <property type="match status" value="1"/>
</dbReference>
<dbReference type="FunFam" id="3.30.300.30:FF:000016">
    <property type="entry name" value="Fatty-acid-CoA ligase FadD26"/>
    <property type="match status" value="1"/>
</dbReference>
<dbReference type="FunFam" id="3.40.50.12780:FF:000013">
    <property type="entry name" value="Long-chain-fatty-acid--AMP ligase FadD32"/>
    <property type="match status" value="1"/>
</dbReference>
<dbReference type="Gene3D" id="3.30.300.30">
    <property type="match status" value="1"/>
</dbReference>
<dbReference type="Gene3D" id="3.40.50.12780">
    <property type="entry name" value="N-terminal domain of ligase-like"/>
    <property type="match status" value="1"/>
</dbReference>
<dbReference type="InterPro" id="IPR025110">
    <property type="entry name" value="AMP-bd_C"/>
</dbReference>
<dbReference type="InterPro" id="IPR045851">
    <property type="entry name" value="AMP-bd_C_sf"/>
</dbReference>
<dbReference type="InterPro" id="IPR000873">
    <property type="entry name" value="AMP-dep_synth/lig_dom"/>
</dbReference>
<dbReference type="InterPro" id="IPR042099">
    <property type="entry name" value="ANL_N_sf"/>
</dbReference>
<dbReference type="InterPro" id="IPR040097">
    <property type="entry name" value="FAAL/FAAC"/>
</dbReference>
<dbReference type="InterPro" id="IPR053437">
    <property type="entry name" value="LCFA-AMP_ligase_FadD28"/>
</dbReference>
<dbReference type="NCBIfam" id="NF038338">
    <property type="entry name" value="FAAL_FadD28"/>
    <property type="match status" value="1"/>
</dbReference>
<dbReference type="NCBIfam" id="NF004509">
    <property type="entry name" value="PRK05850.1"/>
    <property type="match status" value="1"/>
</dbReference>
<dbReference type="PANTHER" id="PTHR22754:SF32">
    <property type="entry name" value="DISCO-INTERACTING PROTEIN 2"/>
    <property type="match status" value="1"/>
</dbReference>
<dbReference type="PANTHER" id="PTHR22754">
    <property type="entry name" value="DISCO-INTERACTING PROTEIN 2 DIP2 -RELATED"/>
    <property type="match status" value="1"/>
</dbReference>
<dbReference type="Pfam" id="PF00501">
    <property type="entry name" value="AMP-binding"/>
    <property type="match status" value="1"/>
</dbReference>
<dbReference type="Pfam" id="PF23024">
    <property type="entry name" value="AMP-dom_DIP2-like"/>
    <property type="match status" value="1"/>
</dbReference>
<dbReference type="SUPFAM" id="SSF56801">
    <property type="entry name" value="Acetyl-CoA synthetase-like"/>
    <property type="match status" value="1"/>
</dbReference>
<feature type="chain" id="PRO_0000426833" description="Long-chain-fatty-acid--AMP ligase FadD28">
    <location>
        <begin position="1"/>
        <end position="580"/>
    </location>
</feature>
<feature type="region of interest" description="Disordered" evidence="3">
    <location>
        <begin position="421"/>
        <end position="440"/>
    </location>
</feature>
<feature type="site" description="Important for substrate selectivity" evidence="1">
    <location>
        <position position="227"/>
    </location>
</feature>
<feature type="site" description="Important for substrate selectivity" evidence="1">
    <location>
        <position position="330"/>
    </location>
</feature>
<name>FAA28_MYCTO</name>